<protein>
    <recommendedName>
        <fullName evidence="1">Large ribosomal subunit protein uL11</fullName>
    </recommendedName>
    <alternativeName>
        <fullName evidence="2">50S ribosomal protein L11</fullName>
    </alternativeName>
</protein>
<reference key="1">
    <citation type="journal article" date="2008" name="Genome Biol.">
        <title>The complete genome, comparative and functional analysis of Stenotrophomonas maltophilia reveals an organism heavily shielded by drug resistance determinants.</title>
        <authorList>
            <person name="Crossman L.C."/>
            <person name="Gould V.C."/>
            <person name="Dow J.M."/>
            <person name="Vernikos G.S."/>
            <person name="Okazaki A."/>
            <person name="Sebaihia M."/>
            <person name="Saunders D."/>
            <person name="Arrowsmith C."/>
            <person name="Carver T."/>
            <person name="Peters N."/>
            <person name="Adlem E."/>
            <person name="Kerhornou A."/>
            <person name="Lord A."/>
            <person name="Murphy L."/>
            <person name="Seeger K."/>
            <person name="Squares R."/>
            <person name="Rutter S."/>
            <person name="Quail M.A."/>
            <person name="Rajandream M.A."/>
            <person name="Harris D."/>
            <person name="Churcher C."/>
            <person name="Bentley S.D."/>
            <person name="Parkhill J."/>
            <person name="Thomson N.R."/>
            <person name="Avison M.B."/>
        </authorList>
    </citation>
    <scope>NUCLEOTIDE SEQUENCE [LARGE SCALE GENOMIC DNA]</scope>
    <source>
        <strain>K279a</strain>
    </source>
</reference>
<comment type="function">
    <text evidence="1">Forms part of the ribosomal stalk which helps the ribosome interact with GTP-bound translation factors.</text>
</comment>
<comment type="subunit">
    <text evidence="1">Part of the ribosomal stalk of the 50S ribosomal subunit. Interacts with L10 and the large rRNA to form the base of the stalk. L10 forms an elongated spine to which L12 dimers bind in a sequential fashion forming a multimeric L10(L12)X complex.</text>
</comment>
<comment type="PTM">
    <text evidence="1">One or more lysine residues are methylated.</text>
</comment>
<comment type="similarity">
    <text evidence="1">Belongs to the universal ribosomal protein uL11 family.</text>
</comment>
<evidence type="ECO:0000255" key="1">
    <source>
        <dbReference type="HAMAP-Rule" id="MF_00736"/>
    </source>
</evidence>
<evidence type="ECO:0000305" key="2"/>
<organism>
    <name type="scientific">Stenotrophomonas maltophilia (strain K279a)</name>
    <dbReference type="NCBI Taxonomy" id="522373"/>
    <lineage>
        <taxon>Bacteria</taxon>
        <taxon>Pseudomonadati</taxon>
        <taxon>Pseudomonadota</taxon>
        <taxon>Gammaproteobacteria</taxon>
        <taxon>Lysobacterales</taxon>
        <taxon>Lysobacteraceae</taxon>
        <taxon>Stenotrophomonas</taxon>
        <taxon>Stenotrophomonas maltophilia group</taxon>
    </lineage>
</organism>
<name>RL11_STRMK</name>
<accession>B2FQ34</accession>
<keyword id="KW-0488">Methylation</keyword>
<keyword id="KW-1185">Reference proteome</keyword>
<keyword id="KW-0687">Ribonucleoprotein</keyword>
<keyword id="KW-0689">Ribosomal protein</keyword>
<keyword id="KW-0694">RNA-binding</keyword>
<keyword id="KW-0699">rRNA-binding</keyword>
<sequence length="142" mass="14907">MAKKVVGYIKLQVKAGQANPSPPVGPALGQRGLNIMEFCKAFNAATQKLEPGLPVPVIITAYSDRTFTFITKSTPATTLLKKAAGISSGSKRPNTEKVGKVTRKQLEEIAKAKEPDLTAADLDAAVRTIAGSARSMGLVVEG</sequence>
<feature type="chain" id="PRO_1000195718" description="Large ribosomal subunit protein uL11">
    <location>
        <begin position="1"/>
        <end position="142"/>
    </location>
</feature>
<dbReference type="EMBL" id="AM743169">
    <property type="protein sequence ID" value="CAQ44464.1"/>
    <property type="molecule type" value="Genomic_DNA"/>
</dbReference>
<dbReference type="RefSeq" id="WP_004145248.1">
    <property type="nucleotide sequence ID" value="NC_010943.1"/>
</dbReference>
<dbReference type="SMR" id="B2FQ34"/>
<dbReference type="EnsemblBacteria" id="CAQ44464">
    <property type="protein sequence ID" value="CAQ44464"/>
    <property type="gene ID" value="Smlt0894"/>
</dbReference>
<dbReference type="GeneID" id="97259923"/>
<dbReference type="KEGG" id="sml:Smlt0894"/>
<dbReference type="eggNOG" id="COG0080">
    <property type="taxonomic scope" value="Bacteria"/>
</dbReference>
<dbReference type="HOGENOM" id="CLU_074237_2_0_6"/>
<dbReference type="Proteomes" id="UP000008840">
    <property type="component" value="Chromosome"/>
</dbReference>
<dbReference type="GO" id="GO:0022625">
    <property type="term" value="C:cytosolic large ribosomal subunit"/>
    <property type="evidence" value="ECO:0007669"/>
    <property type="project" value="TreeGrafter"/>
</dbReference>
<dbReference type="GO" id="GO:0070180">
    <property type="term" value="F:large ribosomal subunit rRNA binding"/>
    <property type="evidence" value="ECO:0007669"/>
    <property type="project" value="UniProtKB-UniRule"/>
</dbReference>
<dbReference type="GO" id="GO:0003735">
    <property type="term" value="F:structural constituent of ribosome"/>
    <property type="evidence" value="ECO:0007669"/>
    <property type="project" value="InterPro"/>
</dbReference>
<dbReference type="GO" id="GO:0006412">
    <property type="term" value="P:translation"/>
    <property type="evidence" value="ECO:0007669"/>
    <property type="project" value="UniProtKB-UniRule"/>
</dbReference>
<dbReference type="CDD" id="cd00349">
    <property type="entry name" value="Ribosomal_L11"/>
    <property type="match status" value="1"/>
</dbReference>
<dbReference type="FunFam" id="1.10.10.250:FF:000001">
    <property type="entry name" value="50S ribosomal protein L11"/>
    <property type="match status" value="1"/>
</dbReference>
<dbReference type="FunFam" id="3.30.1550.10:FF:000001">
    <property type="entry name" value="50S ribosomal protein L11"/>
    <property type="match status" value="1"/>
</dbReference>
<dbReference type="Gene3D" id="1.10.10.250">
    <property type="entry name" value="Ribosomal protein L11, C-terminal domain"/>
    <property type="match status" value="1"/>
</dbReference>
<dbReference type="Gene3D" id="3.30.1550.10">
    <property type="entry name" value="Ribosomal protein L11/L12, N-terminal domain"/>
    <property type="match status" value="1"/>
</dbReference>
<dbReference type="HAMAP" id="MF_00736">
    <property type="entry name" value="Ribosomal_uL11"/>
    <property type="match status" value="1"/>
</dbReference>
<dbReference type="InterPro" id="IPR000911">
    <property type="entry name" value="Ribosomal_uL11"/>
</dbReference>
<dbReference type="InterPro" id="IPR006519">
    <property type="entry name" value="Ribosomal_uL11_bac-typ"/>
</dbReference>
<dbReference type="InterPro" id="IPR020783">
    <property type="entry name" value="Ribosomal_uL11_C"/>
</dbReference>
<dbReference type="InterPro" id="IPR036769">
    <property type="entry name" value="Ribosomal_uL11_C_sf"/>
</dbReference>
<dbReference type="InterPro" id="IPR020785">
    <property type="entry name" value="Ribosomal_uL11_CS"/>
</dbReference>
<dbReference type="InterPro" id="IPR020784">
    <property type="entry name" value="Ribosomal_uL11_N"/>
</dbReference>
<dbReference type="InterPro" id="IPR036796">
    <property type="entry name" value="Ribosomal_uL11_N_sf"/>
</dbReference>
<dbReference type="NCBIfam" id="TIGR01632">
    <property type="entry name" value="L11_bact"/>
    <property type="match status" value="1"/>
</dbReference>
<dbReference type="PANTHER" id="PTHR11661">
    <property type="entry name" value="60S RIBOSOMAL PROTEIN L12"/>
    <property type="match status" value="1"/>
</dbReference>
<dbReference type="PANTHER" id="PTHR11661:SF1">
    <property type="entry name" value="LARGE RIBOSOMAL SUBUNIT PROTEIN UL11M"/>
    <property type="match status" value="1"/>
</dbReference>
<dbReference type="Pfam" id="PF00298">
    <property type="entry name" value="Ribosomal_L11"/>
    <property type="match status" value="1"/>
</dbReference>
<dbReference type="Pfam" id="PF03946">
    <property type="entry name" value="Ribosomal_L11_N"/>
    <property type="match status" value="1"/>
</dbReference>
<dbReference type="SMART" id="SM00649">
    <property type="entry name" value="RL11"/>
    <property type="match status" value="1"/>
</dbReference>
<dbReference type="SUPFAM" id="SSF54747">
    <property type="entry name" value="Ribosomal L11/L12e N-terminal domain"/>
    <property type="match status" value="1"/>
</dbReference>
<dbReference type="SUPFAM" id="SSF46906">
    <property type="entry name" value="Ribosomal protein L11, C-terminal domain"/>
    <property type="match status" value="1"/>
</dbReference>
<dbReference type="PROSITE" id="PS00359">
    <property type="entry name" value="RIBOSOMAL_L11"/>
    <property type="match status" value="1"/>
</dbReference>
<gene>
    <name evidence="1" type="primary">rplK</name>
    <name type="ordered locus">Smlt0894</name>
</gene>
<proteinExistence type="inferred from homology"/>